<comment type="function">
    <text evidence="2">Component of the acetyl coenzyme A carboxylase (ACC) complex. Biotin carboxylase (BC) catalyzes the carboxylation of biotin on its carrier protein (BCCP) and then the CO(2) group is transferred by the transcarboxylase to acetyl-CoA to form malonyl-CoA.</text>
</comment>
<comment type="catalytic activity">
    <reaction evidence="2">
        <text>N(6)-carboxybiotinyl-L-lysyl-[protein] + acetyl-CoA = N(6)-biotinyl-L-lysyl-[protein] + malonyl-CoA</text>
        <dbReference type="Rhea" id="RHEA:54728"/>
        <dbReference type="Rhea" id="RHEA-COMP:10505"/>
        <dbReference type="Rhea" id="RHEA-COMP:10506"/>
        <dbReference type="ChEBI" id="CHEBI:57288"/>
        <dbReference type="ChEBI" id="CHEBI:57384"/>
        <dbReference type="ChEBI" id="CHEBI:83144"/>
        <dbReference type="ChEBI" id="CHEBI:83145"/>
        <dbReference type="EC" id="2.1.3.15"/>
    </reaction>
</comment>
<comment type="cofactor">
    <cofactor evidence="2">
        <name>Zn(2+)</name>
        <dbReference type="ChEBI" id="CHEBI:29105"/>
    </cofactor>
    <text evidence="2">Binds 1 zinc ion per subunit.</text>
</comment>
<comment type="pathway">
    <text evidence="2">Lipid metabolism; malonyl-CoA biosynthesis; malonyl-CoA from acetyl-CoA: step 1/1.</text>
</comment>
<comment type="subunit">
    <text evidence="1">Acetyl-CoA carboxylase is a heterohexamer composed of biotin carboxyl carrier protein, biotin carboxylase and 2 subunits each of ACCase subunit alpha and ACCase plastid-coded subunit beta (accD).</text>
</comment>
<comment type="subcellular location">
    <subcellularLocation>
        <location evidence="2">Plastid</location>
        <location evidence="2">Chloroplast stroma</location>
    </subcellularLocation>
</comment>
<comment type="similarity">
    <text evidence="2">Belongs to the AccD/PCCB family.</text>
</comment>
<feature type="chain" id="PRO_0000359148" description="Acetyl-coenzyme A carboxylase carboxyl transferase subunit beta, chloroplastic">
    <location>
        <begin position="1"/>
        <end position="487"/>
    </location>
</feature>
<feature type="domain" description="CoA carboxyltransferase N-terminal" evidence="3">
    <location>
        <begin position="223"/>
        <end position="487"/>
    </location>
</feature>
<feature type="zinc finger region" description="C4-type" evidence="2">
    <location>
        <begin position="227"/>
        <end position="246"/>
    </location>
</feature>
<feature type="binding site" evidence="2">
    <location>
        <position position="227"/>
    </location>
    <ligand>
        <name>Zn(2+)</name>
        <dbReference type="ChEBI" id="CHEBI:29105"/>
    </ligand>
</feature>
<feature type="binding site" evidence="2">
    <location>
        <position position="230"/>
    </location>
    <ligand>
        <name>Zn(2+)</name>
        <dbReference type="ChEBI" id="CHEBI:29105"/>
    </ligand>
</feature>
<feature type="binding site" evidence="2">
    <location>
        <position position="243"/>
    </location>
    <ligand>
        <name>Zn(2+)</name>
        <dbReference type="ChEBI" id="CHEBI:29105"/>
    </ligand>
</feature>
<feature type="binding site" evidence="2">
    <location>
        <position position="246"/>
    </location>
    <ligand>
        <name>Zn(2+)</name>
        <dbReference type="ChEBI" id="CHEBI:29105"/>
    </ligand>
</feature>
<geneLocation type="chloroplast"/>
<name>ACCD_LEPVR</name>
<protein>
    <recommendedName>
        <fullName evidence="2">Acetyl-coenzyme A carboxylase carboxyl transferase subunit beta, chloroplastic</fullName>
        <shortName evidence="2">ACCase subunit beta</shortName>
        <shortName evidence="2">Acetyl-CoA carboxylase carboxyltransferase subunit beta</shortName>
        <ecNumber evidence="2">2.1.3.15</ecNumber>
    </recommendedName>
</protein>
<sequence>MEKSWFNLMFSKGELEYRGELSKAMDSFAPSEKTTLSQDRFIYDMDKNFYGWGERSSYSTNVDLLVSSKDIRNFISDDTFFVRDGNKNSYSIYFDIKKKKFEIDNDLSDLEFFFYSYCSSSYLNNRLKGDNDLHYDPYIKDTKYNCTNHINSCIDSYFRSHICIDSNFLSDSNNSNESYIYNFICSESGKIRESKNYKIRTNRNRSNLMSSKDFDITQNYNQLWIQCDNCYGLMYKKVKMNVCEQCGHYLKMSSSERIELSIDPGTWNPMDEDMVSADPIKFHSREEPYKNRIDSAQKTTGLTDAVQTGTGQLNGIPVALGVMDFKFLGGSMGSVVGEKITRLIEYATNQRLPLILVCSSGGARMQEGSLSLMQMAKISSVLCDYQSSKKLFYISILTSPTTGGVTASFGMLGDIIIAEPYAYIAFAGKRVIEQTLKKAVPEGSQAAESLLRKGLLDAIVPRNPLKGVLSELFQLHAFFPLKKNEIK</sequence>
<dbReference type="EC" id="2.1.3.15" evidence="2"/>
<dbReference type="EMBL" id="AP009374">
    <property type="protein sequence ID" value="BAF50470.1"/>
    <property type="molecule type" value="Genomic_DNA"/>
</dbReference>
<dbReference type="RefSeq" id="YP_001123646.1">
    <property type="nucleotide sequence ID" value="NC_009273.1"/>
</dbReference>
<dbReference type="SMR" id="A4QLB5"/>
<dbReference type="GeneID" id="4962029"/>
<dbReference type="UniPathway" id="UPA00655">
    <property type="reaction ID" value="UER00711"/>
</dbReference>
<dbReference type="GO" id="GO:0009317">
    <property type="term" value="C:acetyl-CoA carboxylase complex"/>
    <property type="evidence" value="ECO:0007669"/>
    <property type="project" value="InterPro"/>
</dbReference>
<dbReference type="GO" id="GO:0009570">
    <property type="term" value="C:chloroplast stroma"/>
    <property type="evidence" value="ECO:0007669"/>
    <property type="project" value="UniProtKB-SubCell"/>
</dbReference>
<dbReference type="GO" id="GO:0003989">
    <property type="term" value="F:acetyl-CoA carboxylase activity"/>
    <property type="evidence" value="ECO:0007669"/>
    <property type="project" value="InterPro"/>
</dbReference>
<dbReference type="GO" id="GO:0005524">
    <property type="term" value="F:ATP binding"/>
    <property type="evidence" value="ECO:0007669"/>
    <property type="project" value="UniProtKB-KW"/>
</dbReference>
<dbReference type="GO" id="GO:0016743">
    <property type="term" value="F:carboxyl- or carbamoyltransferase activity"/>
    <property type="evidence" value="ECO:0007669"/>
    <property type="project" value="UniProtKB-UniRule"/>
</dbReference>
<dbReference type="GO" id="GO:0008270">
    <property type="term" value="F:zinc ion binding"/>
    <property type="evidence" value="ECO:0007669"/>
    <property type="project" value="UniProtKB-UniRule"/>
</dbReference>
<dbReference type="GO" id="GO:0006633">
    <property type="term" value="P:fatty acid biosynthetic process"/>
    <property type="evidence" value="ECO:0007669"/>
    <property type="project" value="UniProtKB-KW"/>
</dbReference>
<dbReference type="GO" id="GO:2001295">
    <property type="term" value="P:malonyl-CoA biosynthetic process"/>
    <property type="evidence" value="ECO:0007669"/>
    <property type="project" value="UniProtKB-UniRule"/>
</dbReference>
<dbReference type="Gene3D" id="3.90.226.10">
    <property type="entry name" value="2-enoyl-CoA Hydratase, Chain A, domain 1"/>
    <property type="match status" value="1"/>
</dbReference>
<dbReference type="HAMAP" id="MF_01395">
    <property type="entry name" value="AcetylCoA_CT_beta"/>
    <property type="match status" value="1"/>
</dbReference>
<dbReference type="InterPro" id="IPR034733">
    <property type="entry name" value="AcCoA_carboxyl_beta"/>
</dbReference>
<dbReference type="InterPro" id="IPR000438">
    <property type="entry name" value="Acetyl_CoA_COase_Trfase_b_su"/>
</dbReference>
<dbReference type="InterPro" id="IPR029045">
    <property type="entry name" value="ClpP/crotonase-like_dom_sf"/>
</dbReference>
<dbReference type="InterPro" id="IPR011762">
    <property type="entry name" value="COA_CT_N"/>
</dbReference>
<dbReference type="NCBIfam" id="TIGR00515">
    <property type="entry name" value="accD"/>
    <property type="match status" value="1"/>
</dbReference>
<dbReference type="PANTHER" id="PTHR42995">
    <property type="entry name" value="ACETYL-COENZYME A CARBOXYLASE CARBOXYL TRANSFERASE SUBUNIT BETA, CHLOROPLASTIC"/>
    <property type="match status" value="1"/>
</dbReference>
<dbReference type="PANTHER" id="PTHR42995:SF5">
    <property type="entry name" value="ACETYL-COENZYME A CARBOXYLASE CARBOXYL TRANSFERASE SUBUNIT BETA, CHLOROPLASTIC"/>
    <property type="match status" value="1"/>
</dbReference>
<dbReference type="Pfam" id="PF01039">
    <property type="entry name" value="Carboxyl_trans"/>
    <property type="match status" value="1"/>
</dbReference>
<dbReference type="PRINTS" id="PR01070">
    <property type="entry name" value="ACCCTRFRASEB"/>
</dbReference>
<dbReference type="SUPFAM" id="SSF52096">
    <property type="entry name" value="ClpP/crotonase"/>
    <property type="match status" value="1"/>
</dbReference>
<dbReference type="PROSITE" id="PS50980">
    <property type="entry name" value="COA_CT_NTER"/>
    <property type="match status" value="1"/>
</dbReference>
<accession>A4QLB5</accession>
<gene>
    <name evidence="2" type="primary">accD</name>
</gene>
<evidence type="ECO:0000250" key="1"/>
<evidence type="ECO:0000255" key="2">
    <source>
        <dbReference type="HAMAP-Rule" id="MF_01395"/>
    </source>
</evidence>
<evidence type="ECO:0000255" key="3">
    <source>
        <dbReference type="PROSITE-ProRule" id="PRU01136"/>
    </source>
</evidence>
<keyword id="KW-0067">ATP-binding</keyword>
<keyword id="KW-0150">Chloroplast</keyword>
<keyword id="KW-0275">Fatty acid biosynthesis</keyword>
<keyword id="KW-0276">Fatty acid metabolism</keyword>
<keyword id="KW-0444">Lipid biosynthesis</keyword>
<keyword id="KW-0443">Lipid metabolism</keyword>
<keyword id="KW-0479">Metal-binding</keyword>
<keyword id="KW-0547">Nucleotide-binding</keyword>
<keyword id="KW-0934">Plastid</keyword>
<keyword id="KW-0808">Transferase</keyword>
<keyword id="KW-0862">Zinc</keyword>
<keyword id="KW-0863">Zinc-finger</keyword>
<proteinExistence type="inferred from homology"/>
<organism>
    <name type="scientific">Lepidium virginicum</name>
    <name type="common">Virginia pepperweed</name>
    <dbReference type="NCBI Taxonomy" id="59292"/>
    <lineage>
        <taxon>Eukaryota</taxon>
        <taxon>Viridiplantae</taxon>
        <taxon>Streptophyta</taxon>
        <taxon>Embryophyta</taxon>
        <taxon>Tracheophyta</taxon>
        <taxon>Spermatophyta</taxon>
        <taxon>Magnoliopsida</taxon>
        <taxon>eudicotyledons</taxon>
        <taxon>Gunneridae</taxon>
        <taxon>Pentapetalae</taxon>
        <taxon>rosids</taxon>
        <taxon>malvids</taxon>
        <taxon>Brassicales</taxon>
        <taxon>Brassicaceae</taxon>
        <taxon>Lepidieae</taxon>
        <taxon>Lepidium</taxon>
    </lineage>
</organism>
<reference key="1">
    <citation type="submission" date="2007-03" db="EMBL/GenBank/DDBJ databases">
        <title>Sequencing analysis of Lepidium virginicum JO26 chloroplast DNA.</title>
        <authorList>
            <person name="Hosouchi T."/>
            <person name="Tsuruoka H."/>
            <person name="Kotani H."/>
        </authorList>
    </citation>
    <scope>NUCLEOTIDE SEQUENCE [LARGE SCALE GENOMIC DNA]</scope>
</reference>